<comment type="function">
    <text evidence="1">Catalyzes the formation of N(4)-acetylcytidine (ac(4)C) at the wobble position of elongator tRNA(Met), using acetate and ATP as substrates. First activates an acetate ion to form acetyladenylate (Ac-AMP) and then transfers the acetyl group to tRNA to form ac(4)C34.</text>
</comment>
<comment type="catalytic activity">
    <reaction evidence="1">
        <text>cytidine(34) in elongator tRNA(Met) + acetate + ATP = N(4)-acetylcytidine(34) in elongator tRNA(Met) + AMP + diphosphate</text>
        <dbReference type="Rhea" id="RHEA:58144"/>
        <dbReference type="Rhea" id="RHEA-COMP:10693"/>
        <dbReference type="Rhea" id="RHEA-COMP:10694"/>
        <dbReference type="ChEBI" id="CHEBI:30089"/>
        <dbReference type="ChEBI" id="CHEBI:30616"/>
        <dbReference type="ChEBI" id="CHEBI:33019"/>
        <dbReference type="ChEBI" id="CHEBI:74900"/>
        <dbReference type="ChEBI" id="CHEBI:82748"/>
        <dbReference type="ChEBI" id="CHEBI:456215"/>
    </reaction>
</comment>
<comment type="subcellular location">
    <subcellularLocation>
        <location evidence="1">Cytoplasm</location>
    </subcellularLocation>
</comment>
<comment type="similarity">
    <text evidence="1">Belongs to the TmcAL family.</text>
</comment>
<organism>
    <name type="scientific">Bacillus anthracis (strain A0248)</name>
    <dbReference type="NCBI Taxonomy" id="592021"/>
    <lineage>
        <taxon>Bacteria</taxon>
        <taxon>Bacillati</taxon>
        <taxon>Bacillota</taxon>
        <taxon>Bacilli</taxon>
        <taxon>Bacillales</taxon>
        <taxon>Bacillaceae</taxon>
        <taxon>Bacillus</taxon>
        <taxon>Bacillus cereus group</taxon>
    </lineage>
</organism>
<accession>C3P6T3</accession>
<reference key="1">
    <citation type="submission" date="2009-04" db="EMBL/GenBank/DDBJ databases">
        <title>Genome sequence of Bacillus anthracis A0248.</title>
        <authorList>
            <person name="Dodson R.J."/>
            <person name="Munk A.C."/>
            <person name="Bruce D."/>
            <person name="Detter C."/>
            <person name="Tapia R."/>
            <person name="Sutton G."/>
            <person name="Sims D."/>
            <person name="Brettin T."/>
        </authorList>
    </citation>
    <scope>NUCLEOTIDE SEQUENCE [LARGE SCALE GENOMIC DNA]</scope>
    <source>
        <strain>A0248</strain>
    </source>
</reference>
<dbReference type="EC" id="6.3.4.-" evidence="1"/>
<dbReference type="EMBL" id="CP001598">
    <property type="protein sequence ID" value="ACQ48480.1"/>
    <property type="molecule type" value="Genomic_DNA"/>
</dbReference>
<dbReference type="SMR" id="C3P6T3"/>
<dbReference type="KEGG" id="bai:BAA_4158"/>
<dbReference type="HOGENOM" id="CLU_038915_0_2_9"/>
<dbReference type="GO" id="GO:0005737">
    <property type="term" value="C:cytoplasm"/>
    <property type="evidence" value="ECO:0007669"/>
    <property type="project" value="UniProtKB-SubCell"/>
</dbReference>
<dbReference type="GO" id="GO:0005524">
    <property type="term" value="F:ATP binding"/>
    <property type="evidence" value="ECO:0007669"/>
    <property type="project" value="UniProtKB-KW"/>
</dbReference>
<dbReference type="GO" id="GO:0016879">
    <property type="term" value="F:ligase activity, forming carbon-nitrogen bonds"/>
    <property type="evidence" value="ECO:0007669"/>
    <property type="project" value="UniProtKB-UniRule"/>
</dbReference>
<dbReference type="GO" id="GO:0000049">
    <property type="term" value="F:tRNA binding"/>
    <property type="evidence" value="ECO:0007669"/>
    <property type="project" value="UniProtKB-KW"/>
</dbReference>
<dbReference type="GO" id="GO:0006400">
    <property type="term" value="P:tRNA modification"/>
    <property type="evidence" value="ECO:0007669"/>
    <property type="project" value="UniProtKB-UniRule"/>
</dbReference>
<dbReference type="Gene3D" id="3.40.50.620">
    <property type="entry name" value="HUPs"/>
    <property type="match status" value="1"/>
</dbReference>
<dbReference type="HAMAP" id="MF_01539">
    <property type="entry name" value="TmcAL"/>
    <property type="match status" value="1"/>
</dbReference>
<dbReference type="InterPro" id="IPR014729">
    <property type="entry name" value="Rossmann-like_a/b/a_fold"/>
</dbReference>
<dbReference type="InterPro" id="IPR008513">
    <property type="entry name" value="tRNA(Met)_cyd_acetate_ligase"/>
</dbReference>
<dbReference type="NCBIfam" id="NF010191">
    <property type="entry name" value="PRK13670.1"/>
    <property type="match status" value="1"/>
</dbReference>
<dbReference type="PANTHER" id="PTHR37825">
    <property type="entry name" value="TRNA(MET) CYTIDINE ACETATE LIGASE"/>
    <property type="match status" value="1"/>
</dbReference>
<dbReference type="PANTHER" id="PTHR37825:SF1">
    <property type="entry name" value="TRNA(MET) CYTIDINE ACETATE LIGASE"/>
    <property type="match status" value="1"/>
</dbReference>
<dbReference type="Pfam" id="PF05636">
    <property type="entry name" value="HIGH_NTase1"/>
    <property type="match status" value="1"/>
</dbReference>
<dbReference type="SUPFAM" id="SSF52374">
    <property type="entry name" value="Nucleotidylyl transferase"/>
    <property type="match status" value="1"/>
</dbReference>
<keyword id="KW-0067">ATP-binding</keyword>
<keyword id="KW-0963">Cytoplasm</keyword>
<keyword id="KW-0436">Ligase</keyword>
<keyword id="KW-0547">Nucleotide-binding</keyword>
<keyword id="KW-0694">RNA-binding</keyword>
<keyword id="KW-0819">tRNA processing</keyword>
<keyword id="KW-0820">tRNA-binding</keyword>
<protein>
    <recommendedName>
        <fullName evidence="1">tRNA(Met) cytidine acetate ligase</fullName>
        <ecNumber evidence="1">6.3.4.-</ecNumber>
    </recommendedName>
</protein>
<name>TMCAL_BACAA</name>
<proteinExistence type="inferred from homology"/>
<gene>
    <name evidence="1" type="primary">tmcAL</name>
    <name type="ordered locus">BAA_4158</name>
</gene>
<sequence length="393" mass="45368">MQQTKKLTHSDITIAVMSGPFLQRGEPALVSKWYRTKMALACGVDLVVELPYAFSTQKAETFANGAISILNALHVSEICFGSEDGQIENFYNTISVQKNEEETFNRLVKQFMNAGNSYAKATSEAFLHILSSEKNIDMSQPNNILGFQYIKAILMQNSSMQAQTIKRFASHYHDETFNDQHIASATSIRKQLFSENSSFTEIESFIPKATASLLASYKQNYGTLHNWEQYFSFFKYKLMTMSPENLRHIYEIEEGLEHRILSKIQTSSSFHSFMESLKTKRYTWTRLQRACTHILTNTTKEEIYCANIEQHAPYIRLLGMSQKGQTYLSKNKKKIELPILTHTKTFDHPTLHIERKANSVYFSIMKEPLRTQLLKRDATHHPIRYDETTAKFL</sequence>
<evidence type="ECO:0000255" key="1">
    <source>
        <dbReference type="HAMAP-Rule" id="MF_01539"/>
    </source>
</evidence>
<feature type="chain" id="PRO_1000185213" description="tRNA(Met) cytidine acetate ligase">
    <location>
        <begin position="1"/>
        <end position="393"/>
    </location>
</feature>
<feature type="binding site" evidence="1">
    <location>
        <position position="81"/>
    </location>
    <ligand>
        <name>ATP</name>
        <dbReference type="ChEBI" id="CHEBI:30616"/>
    </ligand>
</feature>
<feature type="binding site" evidence="1">
    <location>
        <position position="142"/>
    </location>
    <ligand>
        <name>ATP</name>
        <dbReference type="ChEBI" id="CHEBI:30616"/>
    </ligand>
</feature>
<feature type="binding site" evidence="1">
    <location>
        <position position="167"/>
    </location>
    <ligand>
        <name>ATP</name>
        <dbReference type="ChEBI" id="CHEBI:30616"/>
    </ligand>
</feature>